<organism>
    <name type="scientific">Corynebacterium aurimucosum (strain ATCC 700975 / DSM 44827 / CIP 107346 / CN-1)</name>
    <name type="common">Corynebacterium nigricans</name>
    <dbReference type="NCBI Taxonomy" id="548476"/>
    <lineage>
        <taxon>Bacteria</taxon>
        <taxon>Bacillati</taxon>
        <taxon>Actinomycetota</taxon>
        <taxon>Actinomycetes</taxon>
        <taxon>Mycobacteriales</taxon>
        <taxon>Corynebacteriaceae</taxon>
        <taxon>Corynebacterium</taxon>
    </lineage>
</organism>
<proteinExistence type="inferred from homology"/>
<protein>
    <recommendedName>
        <fullName evidence="1">Tryptophan synthase alpha chain</fullName>
        <ecNumber evidence="1">4.2.1.20</ecNumber>
    </recommendedName>
</protein>
<accession>C3PKY7</accession>
<evidence type="ECO:0000255" key="1">
    <source>
        <dbReference type="HAMAP-Rule" id="MF_00131"/>
    </source>
</evidence>
<sequence>MSRYEKLFSSLAARKEGAFVPFIMLSDPNPDTALAIVRAAVAGGADALELGVPFSDPVADGPTIQASHIRALAGGATVDSAIEQIRRIRNEFPDLPIGMLIYGNVPFTRGLETFYSEFQEAGADSILLPDVPVREGAPFVAAAEKAGIDPIFIAPAQASEQTLQGVAQYSKGYIYAISRDGVTGTEKESETRGLDEVVNNVKRFGGAPILLGFGISTPQHVADAIAAGAAGAITGSALTKIVDAHLDEEGRPADGLAAAVTGFVSKMKAATKHAES</sequence>
<feature type="chain" id="PRO_1000198708" description="Tryptophan synthase alpha chain">
    <location>
        <begin position="1"/>
        <end position="276"/>
    </location>
</feature>
<feature type="active site" description="Proton acceptor" evidence="1">
    <location>
        <position position="49"/>
    </location>
</feature>
<feature type="active site" description="Proton acceptor" evidence="1">
    <location>
        <position position="60"/>
    </location>
</feature>
<comment type="function">
    <text evidence="1">The alpha subunit is responsible for the aldol cleavage of indoleglycerol phosphate to indole and glyceraldehyde 3-phosphate.</text>
</comment>
<comment type="catalytic activity">
    <reaction evidence="1">
        <text>(1S,2R)-1-C-(indol-3-yl)glycerol 3-phosphate + L-serine = D-glyceraldehyde 3-phosphate + L-tryptophan + H2O</text>
        <dbReference type="Rhea" id="RHEA:10532"/>
        <dbReference type="ChEBI" id="CHEBI:15377"/>
        <dbReference type="ChEBI" id="CHEBI:33384"/>
        <dbReference type="ChEBI" id="CHEBI:57912"/>
        <dbReference type="ChEBI" id="CHEBI:58866"/>
        <dbReference type="ChEBI" id="CHEBI:59776"/>
        <dbReference type="EC" id="4.2.1.20"/>
    </reaction>
</comment>
<comment type="pathway">
    <text evidence="1">Amino-acid biosynthesis; L-tryptophan biosynthesis; L-tryptophan from chorismate: step 5/5.</text>
</comment>
<comment type="subunit">
    <text evidence="1">Tetramer of two alpha and two beta chains.</text>
</comment>
<comment type="similarity">
    <text evidence="1">Belongs to the TrpA family.</text>
</comment>
<name>TRPA_CORA7</name>
<dbReference type="EC" id="4.2.1.20" evidence="1"/>
<dbReference type="EMBL" id="CP001601">
    <property type="protein sequence ID" value="ACP34103.1"/>
    <property type="molecule type" value="Genomic_DNA"/>
</dbReference>
<dbReference type="RefSeq" id="WP_010188018.1">
    <property type="nucleotide sequence ID" value="NC_012590.1"/>
</dbReference>
<dbReference type="SMR" id="C3PKY7"/>
<dbReference type="STRING" id="548476.cauri_2512"/>
<dbReference type="GeneID" id="31925159"/>
<dbReference type="KEGG" id="car:cauri_2512"/>
<dbReference type="eggNOG" id="COG0159">
    <property type="taxonomic scope" value="Bacteria"/>
</dbReference>
<dbReference type="HOGENOM" id="CLU_016734_0_4_11"/>
<dbReference type="OrthoDB" id="9804578at2"/>
<dbReference type="UniPathway" id="UPA00035">
    <property type="reaction ID" value="UER00044"/>
</dbReference>
<dbReference type="Proteomes" id="UP000002077">
    <property type="component" value="Chromosome"/>
</dbReference>
<dbReference type="GO" id="GO:0005829">
    <property type="term" value="C:cytosol"/>
    <property type="evidence" value="ECO:0007669"/>
    <property type="project" value="TreeGrafter"/>
</dbReference>
<dbReference type="GO" id="GO:0004834">
    <property type="term" value="F:tryptophan synthase activity"/>
    <property type="evidence" value="ECO:0007669"/>
    <property type="project" value="UniProtKB-UniRule"/>
</dbReference>
<dbReference type="CDD" id="cd04724">
    <property type="entry name" value="Tryptophan_synthase_alpha"/>
    <property type="match status" value="1"/>
</dbReference>
<dbReference type="FunFam" id="3.20.20.70:FF:000037">
    <property type="entry name" value="Tryptophan synthase alpha chain"/>
    <property type="match status" value="1"/>
</dbReference>
<dbReference type="Gene3D" id="3.20.20.70">
    <property type="entry name" value="Aldolase class I"/>
    <property type="match status" value="1"/>
</dbReference>
<dbReference type="HAMAP" id="MF_00131">
    <property type="entry name" value="Trp_synth_alpha"/>
    <property type="match status" value="1"/>
</dbReference>
<dbReference type="InterPro" id="IPR013785">
    <property type="entry name" value="Aldolase_TIM"/>
</dbReference>
<dbReference type="InterPro" id="IPR011060">
    <property type="entry name" value="RibuloseP-bd_barrel"/>
</dbReference>
<dbReference type="InterPro" id="IPR018204">
    <property type="entry name" value="Trp_synthase_alpha_AS"/>
</dbReference>
<dbReference type="InterPro" id="IPR002028">
    <property type="entry name" value="Trp_synthase_suA"/>
</dbReference>
<dbReference type="NCBIfam" id="TIGR00262">
    <property type="entry name" value="trpA"/>
    <property type="match status" value="1"/>
</dbReference>
<dbReference type="PANTHER" id="PTHR43406:SF1">
    <property type="entry name" value="TRYPTOPHAN SYNTHASE ALPHA CHAIN, CHLOROPLASTIC"/>
    <property type="match status" value="1"/>
</dbReference>
<dbReference type="PANTHER" id="PTHR43406">
    <property type="entry name" value="TRYPTOPHAN SYNTHASE, ALPHA CHAIN"/>
    <property type="match status" value="1"/>
</dbReference>
<dbReference type="Pfam" id="PF00290">
    <property type="entry name" value="Trp_syntA"/>
    <property type="match status" value="1"/>
</dbReference>
<dbReference type="SUPFAM" id="SSF51366">
    <property type="entry name" value="Ribulose-phoshate binding barrel"/>
    <property type="match status" value="1"/>
</dbReference>
<dbReference type="PROSITE" id="PS00167">
    <property type="entry name" value="TRP_SYNTHASE_ALPHA"/>
    <property type="match status" value="1"/>
</dbReference>
<reference key="1">
    <citation type="journal article" date="2010" name="BMC Genomics">
        <title>Complete genome sequence and lifestyle of black-pigmented Corynebacterium aurimucosum ATCC 700975 (formerly C. nigricans CN-1) isolated from a vaginal swab of a woman with spontaneous abortion.</title>
        <authorList>
            <person name="Trost E."/>
            <person name="Gotker S."/>
            <person name="Schneider J."/>
            <person name="Schneiker-Bekel S."/>
            <person name="Szczepanowski R."/>
            <person name="Tilker A."/>
            <person name="Viehoever P."/>
            <person name="Arnold W."/>
            <person name="Bekel T."/>
            <person name="Blom J."/>
            <person name="Gartemann K.H."/>
            <person name="Linke B."/>
            <person name="Goesmann A."/>
            <person name="Puhler A."/>
            <person name="Shukla S.K."/>
            <person name="Tauch A."/>
        </authorList>
    </citation>
    <scope>NUCLEOTIDE SEQUENCE [LARGE SCALE GENOMIC DNA]</scope>
    <source>
        <strain>ATCC 700975 / DSM 44827 / CIP 107346 / CN-1</strain>
    </source>
</reference>
<gene>
    <name evidence="1" type="primary">trpA</name>
    <name type="ordered locus">cauri_2512</name>
</gene>
<keyword id="KW-0028">Amino-acid biosynthesis</keyword>
<keyword id="KW-0057">Aromatic amino acid biosynthesis</keyword>
<keyword id="KW-0456">Lyase</keyword>
<keyword id="KW-1185">Reference proteome</keyword>
<keyword id="KW-0822">Tryptophan biosynthesis</keyword>